<name>GATB_CHLCV</name>
<evidence type="ECO:0000255" key="1">
    <source>
        <dbReference type="HAMAP-Rule" id="MF_00121"/>
    </source>
</evidence>
<proteinExistence type="inferred from homology"/>
<comment type="function">
    <text evidence="1">Allows the formation of correctly charged Asn-tRNA(Asn) or Gln-tRNA(Gln) through the transamidation of misacylated Asp-tRNA(Asn) or Glu-tRNA(Gln) in organisms which lack either or both of asparaginyl-tRNA or glutaminyl-tRNA synthetases. The reaction takes place in the presence of glutamine and ATP through an activated phospho-Asp-tRNA(Asn) or phospho-Glu-tRNA(Gln).</text>
</comment>
<comment type="catalytic activity">
    <reaction evidence="1">
        <text>L-glutamyl-tRNA(Gln) + L-glutamine + ATP + H2O = L-glutaminyl-tRNA(Gln) + L-glutamate + ADP + phosphate + H(+)</text>
        <dbReference type="Rhea" id="RHEA:17521"/>
        <dbReference type="Rhea" id="RHEA-COMP:9681"/>
        <dbReference type="Rhea" id="RHEA-COMP:9684"/>
        <dbReference type="ChEBI" id="CHEBI:15377"/>
        <dbReference type="ChEBI" id="CHEBI:15378"/>
        <dbReference type="ChEBI" id="CHEBI:29985"/>
        <dbReference type="ChEBI" id="CHEBI:30616"/>
        <dbReference type="ChEBI" id="CHEBI:43474"/>
        <dbReference type="ChEBI" id="CHEBI:58359"/>
        <dbReference type="ChEBI" id="CHEBI:78520"/>
        <dbReference type="ChEBI" id="CHEBI:78521"/>
        <dbReference type="ChEBI" id="CHEBI:456216"/>
    </reaction>
</comment>
<comment type="catalytic activity">
    <reaction evidence="1">
        <text>L-aspartyl-tRNA(Asn) + L-glutamine + ATP + H2O = L-asparaginyl-tRNA(Asn) + L-glutamate + ADP + phosphate + 2 H(+)</text>
        <dbReference type="Rhea" id="RHEA:14513"/>
        <dbReference type="Rhea" id="RHEA-COMP:9674"/>
        <dbReference type="Rhea" id="RHEA-COMP:9677"/>
        <dbReference type="ChEBI" id="CHEBI:15377"/>
        <dbReference type="ChEBI" id="CHEBI:15378"/>
        <dbReference type="ChEBI" id="CHEBI:29985"/>
        <dbReference type="ChEBI" id="CHEBI:30616"/>
        <dbReference type="ChEBI" id="CHEBI:43474"/>
        <dbReference type="ChEBI" id="CHEBI:58359"/>
        <dbReference type="ChEBI" id="CHEBI:78515"/>
        <dbReference type="ChEBI" id="CHEBI:78516"/>
        <dbReference type="ChEBI" id="CHEBI:456216"/>
    </reaction>
</comment>
<comment type="subunit">
    <text evidence="1">Heterotrimer of A, B and C subunits.</text>
</comment>
<comment type="similarity">
    <text evidence="1">Belongs to the GatB/GatE family. GatB subfamily.</text>
</comment>
<reference key="1">
    <citation type="journal article" date="2003" name="Nucleic Acids Res.">
        <title>Genome sequence of Chlamydophila caviae (Chlamydia psittaci GPIC): examining the role of niche-specific genes in the evolution of the Chlamydiaceae.</title>
        <authorList>
            <person name="Read T.D."/>
            <person name="Myers G.S.A."/>
            <person name="Brunham R.C."/>
            <person name="Nelson W.C."/>
            <person name="Paulsen I.T."/>
            <person name="Heidelberg J.F."/>
            <person name="Holtzapple E.K."/>
            <person name="Khouri H.M."/>
            <person name="Federova N.B."/>
            <person name="Carty H.A."/>
            <person name="Umayam L.A."/>
            <person name="Haft D.H."/>
            <person name="Peterson J.D."/>
            <person name="Beanan M.J."/>
            <person name="White O."/>
            <person name="Salzberg S.L."/>
            <person name="Hsia R.-C."/>
            <person name="McClarty G."/>
            <person name="Rank R.G."/>
            <person name="Bavoil P.M."/>
            <person name="Fraser C.M."/>
        </authorList>
    </citation>
    <scope>NUCLEOTIDE SEQUENCE [LARGE SCALE GENOMIC DNA]</scope>
    <source>
        <strain>ATCC VR-813 / DSM 19441 / 03DC25 / GPIC</strain>
    </source>
</reference>
<sequence>MSDVYADWESVIGLEVHVELNTKSKLFSCARNRFGDEPNTNISPVCTGMPGSLPVLNKEAVRKAILFGCAVQGEVALLSRFDRKSYFYPDSPRNFQITQFEHPIVRGGRVKAIVQGEERYFELAQAHIEDDAGMLKHFGEFAGVDYNRAGVPLIEIVSKPCMFCADDAVAYATALVSLLDYIGISDCNMEEGSVRFDVNVSVRPRGSDELRNKVEIKNMNSFAFMAQALEAERCRQIEAYLENPNKDPKTVIPGATYRWDPEKKKTVLMRLKERAEDYKYFIEPDLPVLQLTEAYINEIRDTLPELPYDKYQRYLHDYALAEDIAAILISDKHIAHFFELAAAECKNYRALSNWVTVEFAGRCKTQGKNLAFSGILPSSVAQLVNFIDKGVITGKIAKDLADMMMESPEKSPEAILNEHPEMLPMTDESALVAIISEVLAANAQSVIDYKNGKTKALGFLVGQIMKRTQGKAPPNRVNELLLAELDK</sequence>
<feature type="chain" id="PRO_0000148775" description="Aspartyl/glutamyl-tRNA(Asn/Gln) amidotransferase subunit B">
    <location>
        <begin position="1"/>
        <end position="487"/>
    </location>
</feature>
<organism>
    <name type="scientific">Chlamydia caviae (strain ATCC VR-813 / DSM 19441 / 03DC25 / GPIC)</name>
    <name type="common">Chlamydophila caviae</name>
    <dbReference type="NCBI Taxonomy" id="227941"/>
    <lineage>
        <taxon>Bacteria</taxon>
        <taxon>Pseudomonadati</taxon>
        <taxon>Chlamydiota</taxon>
        <taxon>Chlamydiia</taxon>
        <taxon>Chlamydiales</taxon>
        <taxon>Chlamydiaceae</taxon>
        <taxon>Chlamydia/Chlamydophila group</taxon>
        <taxon>Chlamydia</taxon>
    </lineage>
</organism>
<accession>Q823W6</accession>
<dbReference type="EC" id="6.3.5.-" evidence="1"/>
<dbReference type="EMBL" id="AE015925">
    <property type="protein sequence ID" value="AAP05038.1"/>
    <property type="molecule type" value="Genomic_DNA"/>
</dbReference>
<dbReference type="RefSeq" id="WP_011006256.1">
    <property type="nucleotide sequence ID" value="NC_003361.3"/>
</dbReference>
<dbReference type="SMR" id="Q823W6"/>
<dbReference type="STRING" id="227941.CCA_00289"/>
<dbReference type="KEGG" id="cca:CCA_00289"/>
<dbReference type="eggNOG" id="COG0064">
    <property type="taxonomic scope" value="Bacteria"/>
</dbReference>
<dbReference type="HOGENOM" id="CLU_019240_0_0_0"/>
<dbReference type="OrthoDB" id="9804078at2"/>
<dbReference type="Proteomes" id="UP000002193">
    <property type="component" value="Chromosome"/>
</dbReference>
<dbReference type="GO" id="GO:0050566">
    <property type="term" value="F:asparaginyl-tRNA synthase (glutamine-hydrolyzing) activity"/>
    <property type="evidence" value="ECO:0007669"/>
    <property type="project" value="RHEA"/>
</dbReference>
<dbReference type="GO" id="GO:0005524">
    <property type="term" value="F:ATP binding"/>
    <property type="evidence" value="ECO:0007669"/>
    <property type="project" value="UniProtKB-KW"/>
</dbReference>
<dbReference type="GO" id="GO:0050567">
    <property type="term" value="F:glutaminyl-tRNA synthase (glutamine-hydrolyzing) activity"/>
    <property type="evidence" value="ECO:0007669"/>
    <property type="project" value="UniProtKB-UniRule"/>
</dbReference>
<dbReference type="GO" id="GO:0070681">
    <property type="term" value="P:glutaminyl-tRNAGln biosynthesis via transamidation"/>
    <property type="evidence" value="ECO:0007669"/>
    <property type="project" value="TreeGrafter"/>
</dbReference>
<dbReference type="GO" id="GO:0006412">
    <property type="term" value="P:translation"/>
    <property type="evidence" value="ECO:0007669"/>
    <property type="project" value="UniProtKB-UniRule"/>
</dbReference>
<dbReference type="FunFam" id="1.10.10.410:FF:000001">
    <property type="entry name" value="Aspartyl/glutamyl-tRNA(Asn/Gln) amidotransferase subunit B"/>
    <property type="match status" value="1"/>
</dbReference>
<dbReference type="Gene3D" id="1.10.10.410">
    <property type="match status" value="1"/>
</dbReference>
<dbReference type="Gene3D" id="1.10.150.380">
    <property type="entry name" value="GatB domain, N-terminal subdomain"/>
    <property type="match status" value="1"/>
</dbReference>
<dbReference type="HAMAP" id="MF_00121">
    <property type="entry name" value="GatB"/>
    <property type="match status" value="1"/>
</dbReference>
<dbReference type="InterPro" id="IPR017959">
    <property type="entry name" value="Asn/Gln-tRNA_amidoTrfase_suB/E"/>
</dbReference>
<dbReference type="InterPro" id="IPR006075">
    <property type="entry name" value="Asn/Gln-tRNA_Trfase_suB/E_cat"/>
</dbReference>
<dbReference type="InterPro" id="IPR018027">
    <property type="entry name" value="Asn/Gln_amidotransferase"/>
</dbReference>
<dbReference type="InterPro" id="IPR003789">
    <property type="entry name" value="Asn/Gln_tRNA_amidoTrase-B-like"/>
</dbReference>
<dbReference type="InterPro" id="IPR004413">
    <property type="entry name" value="GatB"/>
</dbReference>
<dbReference type="InterPro" id="IPR042114">
    <property type="entry name" value="GatB_C_1"/>
</dbReference>
<dbReference type="InterPro" id="IPR023168">
    <property type="entry name" value="GatB_Yqey_C_2"/>
</dbReference>
<dbReference type="InterPro" id="IPR017958">
    <property type="entry name" value="Gln-tRNA_amidoTrfase_suB_CS"/>
</dbReference>
<dbReference type="InterPro" id="IPR014746">
    <property type="entry name" value="Gln_synth/guanido_kin_cat_dom"/>
</dbReference>
<dbReference type="NCBIfam" id="TIGR00133">
    <property type="entry name" value="gatB"/>
    <property type="match status" value="1"/>
</dbReference>
<dbReference type="NCBIfam" id="NF004012">
    <property type="entry name" value="PRK05477.1-2"/>
    <property type="match status" value="1"/>
</dbReference>
<dbReference type="NCBIfam" id="NF004014">
    <property type="entry name" value="PRK05477.1-4"/>
    <property type="match status" value="1"/>
</dbReference>
<dbReference type="PANTHER" id="PTHR11659">
    <property type="entry name" value="GLUTAMYL-TRNA GLN AMIDOTRANSFERASE SUBUNIT B MITOCHONDRIAL AND PROKARYOTIC PET112-RELATED"/>
    <property type="match status" value="1"/>
</dbReference>
<dbReference type="PANTHER" id="PTHR11659:SF0">
    <property type="entry name" value="GLUTAMYL-TRNA(GLN) AMIDOTRANSFERASE SUBUNIT B, MITOCHONDRIAL"/>
    <property type="match status" value="1"/>
</dbReference>
<dbReference type="Pfam" id="PF02934">
    <property type="entry name" value="GatB_N"/>
    <property type="match status" value="1"/>
</dbReference>
<dbReference type="Pfam" id="PF02637">
    <property type="entry name" value="GatB_Yqey"/>
    <property type="match status" value="1"/>
</dbReference>
<dbReference type="SMART" id="SM00845">
    <property type="entry name" value="GatB_Yqey"/>
    <property type="match status" value="1"/>
</dbReference>
<dbReference type="SUPFAM" id="SSF89095">
    <property type="entry name" value="GatB/YqeY motif"/>
    <property type="match status" value="1"/>
</dbReference>
<dbReference type="SUPFAM" id="SSF55931">
    <property type="entry name" value="Glutamine synthetase/guanido kinase"/>
    <property type="match status" value="1"/>
</dbReference>
<dbReference type="PROSITE" id="PS01234">
    <property type="entry name" value="GATB"/>
    <property type="match status" value="1"/>
</dbReference>
<keyword id="KW-0067">ATP-binding</keyword>
<keyword id="KW-0436">Ligase</keyword>
<keyword id="KW-0547">Nucleotide-binding</keyword>
<keyword id="KW-0648">Protein biosynthesis</keyword>
<protein>
    <recommendedName>
        <fullName evidence="1">Aspartyl/glutamyl-tRNA(Asn/Gln) amidotransferase subunit B</fullName>
        <shortName evidence="1">Asp/Glu-ADT subunit B</shortName>
        <ecNumber evidence="1">6.3.5.-</ecNumber>
    </recommendedName>
</protein>
<gene>
    <name evidence="1" type="primary">gatB</name>
    <name type="ordered locus">CCA_00289</name>
</gene>